<keyword id="KW-0119">Carbohydrate metabolism</keyword>
<keyword id="KW-0378">Hydrolase</keyword>
<keyword id="KW-0460">Magnesium</keyword>
<keyword id="KW-0479">Metal-binding</keyword>
<keyword id="KW-1185">Reference proteome</keyword>
<protein>
    <recommendedName>
        <fullName evidence="1">Phosphoglycolate phosphatase</fullName>
        <shortName evidence="1">PGP</shortName>
        <shortName evidence="1">PGPase</shortName>
        <ecNumber evidence="1">3.1.3.18</ecNumber>
    </recommendedName>
</protein>
<accession>Q88A30</accession>
<name>GPH_PSESM</name>
<sequence length="272" mass="30133">MSDFEQLFAGKLPKLIMFDLDGTLVDSVPDLAVAVDTMLAELGRPTAGLESVRAWVGNGAPVLVRRALANNLDHSGVDEALAERGLDIFMRAYAEKHEFTVVYPGVRETLKWLQKMGVEMALITNKPERFVAPLLDEMKLGRFFRWIIGGDTMPQKKPDPAALFFVMKMAGVPASQSLFVGDSRSDVQAAKAAGVACVALSYGYNHGRPIAEENPAMVIDDLRRLIPGCLDLDAEILLPDIKRPSSRESIVVVTRKLWMKVIKALARWRWRA</sequence>
<gene>
    <name type="ordered locus">PSPTO_0567</name>
</gene>
<dbReference type="EC" id="3.1.3.18" evidence="1"/>
<dbReference type="EMBL" id="AE016853">
    <property type="protein sequence ID" value="AAO54109.1"/>
    <property type="status" value="ALT_INIT"/>
    <property type="molecule type" value="Genomic_DNA"/>
</dbReference>
<dbReference type="RefSeq" id="NP_790414.1">
    <property type="nucleotide sequence ID" value="NC_004578.1"/>
</dbReference>
<dbReference type="RefSeq" id="WP_046463955.1">
    <property type="nucleotide sequence ID" value="NC_004578.1"/>
</dbReference>
<dbReference type="SMR" id="Q88A30"/>
<dbReference type="STRING" id="223283.PSPTO_0567"/>
<dbReference type="GeneID" id="1182177"/>
<dbReference type="KEGG" id="pst:PSPTO_0567"/>
<dbReference type="PATRIC" id="fig|223283.9.peg.576"/>
<dbReference type="eggNOG" id="COG0546">
    <property type="taxonomic scope" value="Bacteria"/>
</dbReference>
<dbReference type="HOGENOM" id="CLU_045011_19_1_6"/>
<dbReference type="OrthoDB" id="9776368at2"/>
<dbReference type="UniPathway" id="UPA00865">
    <property type="reaction ID" value="UER00834"/>
</dbReference>
<dbReference type="Proteomes" id="UP000002515">
    <property type="component" value="Chromosome"/>
</dbReference>
<dbReference type="GO" id="GO:0005829">
    <property type="term" value="C:cytosol"/>
    <property type="evidence" value="ECO:0007669"/>
    <property type="project" value="TreeGrafter"/>
</dbReference>
<dbReference type="GO" id="GO:0046872">
    <property type="term" value="F:metal ion binding"/>
    <property type="evidence" value="ECO:0007669"/>
    <property type="project" value="UniProtKB-KW"/>
</dbReference>
<dbReference type="GO" id="GO:0008967">
    <property type="term" value="F:phosphoglycolate phosphatase activity"/>
    <property type="evidence" value="ECO:0007669"/>
    <property type="project" value="UniProtKB-UniRule"/>
</dbReference>
<dbReference type="GO" id="GO:0005975">
    <property type="term" value="P:carbohydrate metabolic process"/>
    <property type="evidence" value="ECO:0007669"/>
    <property type="project" value="InterPro"/>
</dbReference>
<dbReference type="GO" id="GO:0006281">
    <property type="term" value="P:DNA repair"/>
    <property type="evidence" value="ECO:0007669"/>
    <property type="project" value="TreeGrafter"/>
</dbReference>
<dbReference type="GO" id="GO:0046295">
    <property type="term" value="P:glycolate biosynthetic process"/>
    <property type="evidence" value="ECO:0007669"/>
    <property type="project" value="UniProtKB-UniRule"/>
</dbReference>
<dbReference type="CDD" id="cd16417">
    <property type="entry name" value="HAD_PGPase"/>
    <property type="match status" value="1"/>
</dbReference>
<dbReference type="FunFam" id="3.40.50.1000:FF:000022">
    <property type="entry name" value="Phosphoglycolate phosphatase"/>
    <property type="match status" value="1"/>
</dbReference>
<dbReference type="Gene3D" id="3.40.50.1000">
    <property type="entry name" value="HAD superfamily/HAD-like"/>
    <property type="match status" value="1"/>
</dbReference>
<dbReference type="Gene3D" id="1.10.150.240">
    <property type="entry name" value="Putative phosphatase, domain 2"/>
    <property type="match status" value="1"/>
</dbReference>
<dbReference type="HAMAP" id="MF_00495">
    <property type="entry name" value="GPH_hydrolase_bact"/>
    <property type="match status" value="1"/>
</dbReference>
<dbReference type="InterPro" id="IPR050155">
    <property type="entry name" value="HAD-like_hydrolase_sf"/>
</dbReference>
<dbReference type="InterPro" id="IPR036412">
    <property type="entry name" value="HAD-like_sf"/>
</dbReference>
<dbReference type="InterPro" id="IPR006439">
    <property type="entry name" value="HAD-SF_hydro_IA"/>
</dbReference>
<dbReference type="InterPro" id="IPR041492">
    <property type="entry name" value="HAD_2"/>
</dbReference>
<dbReference type="InterPro" id="IPR023214">
    <property type="entry name" value="HAD_sf"/>
</dbReference>
<dbReference type="InterPro" id="IPR023198">
    <property type="entry name" value="PGP-like_dom2"/>
</dbReference>
<dbReference type="InterPro" id="IPR037512">
    <property type="entry name" value="PGPase_prok"/>
</dbReference>
<dbReference type="NCBIfam" id="TIGR01549">
    <property type="entry name" value="HAD-SF-IA-v1"/>
    <property type="match status" value="1"/>
</dbReference>
<dbReference type="NCBIfam" id="TIGR01509">
    <property type="entry name" value="HAD-SF-IA-v3"/>
    <property type="match status" value="1"/>
</dbReference>
<dbReference type="NCBIfam" id="TIGR01449">
    <property type="entry name" value="PGP_bact"/>
    <property type="match status" value="1"/>
</dbReference>
<dbReference type="NCBIfam" id="NF009695">
    <property type="entry name" value="PRK13222.1-2"/>
    <property type="match status" value="1"/>
</dbReference>
<dbReference type="NCBIfam" id="NF009698">
    <property type="entry name" value="PRK13223.1"/>
    <property type="match status" value="1"/>
</dbReference>
<dbReference type="PANTHER" id="PTHR43434">
    <property type="entry name" value="PHOSPHOGLYCOLATE PHOSPHATASE"/>
    <property type="match status" value="1"/>
</dbReference>
<dbReference type="PANTHER" id="PTHR43434:SF1">
    <property type="entry name" value="PHOSPHOGLYCOLATE PHOSPHATASE"/>
    <property type="match status" value="1"/>
</dbReference>
<dbReference type="Pfam" id="PF13419">
    <property type="entry name" value="HAD_2"/>
    <property type="match status" value="1"/>
</dbReference>
<dbReference type="PRINTS" id="PR00413">
    <property type="entry name" value="HADHALOGNASE"/>
</dbReference>
<dbReference type="SFLD" id="SFLDG01135">
    <property type="entry name" value="C1.5.6:_HAD__Beta-PGM__Phospha"/>
    <property type="match status" value="1"/>
</dbReference>
<dbReference type="SFLD" id="SFLDG01129">
    <property type="entry name" value="C1.5:_HAD__Beta-PGM__Phosphata"/>
    <property type="match status" value="1"/>
</dbReference>
<dbReference type="SUPFAM" id="SSF56784">
    <property type="entry name" value="HAD-like"/>
    <property type="match status" value="1"/>
</dbReference>
<evidence type="ECO:0000255" key="1">
    <source>
        <dbReference type="HAMAP-Rule" id="MF_00495"/>
    </source>
</evidence>
<evidence type="ECO:0000305" key="2"/>
<organism>
    <name type="scientific">Pseudomonas syringae pv. tomato (strain ATCC BAA-871 / DC3000)</name>
    <dbReference type="NCBI Taxonomy" id="223283"/>
    <lineage>
        <taxon>Bacteria</taxon>
        <taxon>Pseudomonadati</taxon>
        <taxon>Pseudomonadota</taxon>
        <taxon>Gammaproteobacteria</taxon>
        <taxon>Pseudomonadales</taxon>
        <taxon>Pseudomonadaceae</taxon>
        <taxon>Pseudomonas</taxon>
    </lineage>
</organism>
<reference key="1">
    <citation type="journal article" date="2003" name="Proc. Natl. Acad. Sci. U.S.A.">
        <title>The complete genome sequence of the Arabidopsis and tomato pathogen Pseudomonas syringae pv. tomato DC3000.</title>
        <authorList>
            <person name="Buell C.R."/>
            <person name="Joardar V."/>
            <person name="Lindeberg M."/>
            <person name="Selengut J."/>
            <person name="Paulsen I.T."/>
            <person name="Gwinn M.L."/>
            <person name="Dodson R.J."/>
            <person name="DeBoy R.T."/>
            <person name="Durkin A.S."/>
            <person name="Kolonay J.F."/>
            <person name="Madupu R."/>
            <person name="Daugherty S.C."/>
            <person name="Brinkac L.M."/>
            <person name="Beanan M.J."/>
            <person name="Haft D.H."/>
            <person name="Nelson W.C."/>
            <person name="Davidsen T.M."/>
            <person name="Zafar N."/>
            <person name="Zhou L."/>
            <person name="Liu J."/>
            <person name="Yuan Q."/>
            <person name="Khouri H.M."/>
            <person name="Fedorova N.B."/>
            <person name="Tran B."/>
            <person name="Russell D."/>
            <person name="Berry K.J."/>
            <person name="Utterback T.R."/>
            <person name="Van Aken S.E."/>
            <person name="Feldblyum T.V."/>
            <person name="D'Ascenzo M."/>
            <person name="Deng W.-L."/>
            <person name="Ramos A.R."/>
            <person name="Alfano J.R."/>
            <person name="Cartinhour S."/>
            <person name="Chatterjee A.K."/>
            <person name="Delaney T.P."/>
            <person name="Lazarowitz S.G."/>
            <person name="Martin G.B."/>
            <person name="Schneider D.J."/>
            <person name="Tang X."/>
            <person name="Bender C.L."/>
            <person name="White O."/>
            <person name="Fraser C.M."/>
            <person name="Collmer A."/>
        </authorList>
    </citation>
    <scope>NUCLEOTIDE SEQUENCE [LARGE SCALE GENOMIC DNA]</scope>
    <source>
        <strain>ATCC BAA-871 / DC3000</strain>
    </source>
</reference>
<proteinExistence type="inferred from homology"/>
<comment type="function">
    <text evidence="1">Specifically catalyzes the dephosphorylation of 2-phosphoglycolate. Is involved in the dissimilation of the intracellular 2-phosphoglycolate formed during the DNA repair of 3'-phosphoglycolate ends, a major class of DNA lesions induced by oxidative stress.</text>
</comment>
<comment type="catalytic activity">
    <reaction evidence="1">
        <text>2-phosphoglycolate + H2O = glycolate + phosphate</text>
        <dbReference type="Rhea" id="RHEA:14369"/>
        <dbReference type="ChEBI" id="CHEBI:15377"/>
        <dbReference type="ChEBI" id="CHEBI:29805"/>
        <dbReference type="ChEBI" id="CHEBI:43474"/>
        <dbReference type="ChEBI" id="CHEBI:58033"/>
        <dbReference type="EC" id="3.1.3.18"/>
    </reaction>
</comment>
<comment type="cofactor">
    <cofactor evidence="1">
        <name>Mg(2+)</name>
        <dbReference type="ChEBI" id="CHEBI:18420"/>
    </cofactor>
</comment>
<comment type="pathway">
    <text evidence="1">Organic acid metabolism; glycolate biosynthesis; glycolate from 2-phosphoglycolate: step 1/1.</text>
</comment>
<comment type="similarity">
    <text evidence="1">Belongs to the HAD-like hydrolase superfamily. CbbY/CbbZ/Gph/YieH family.</text>
</comment>
<comment type="sequence caution" evidence="2">
    <conflict type="erroneous initiation">
        <sequence resource="EMBL-CDS" id="AAO54109"/>
    </conflict>
    <text>Truncated N-terminus.</text>
</comment>
<feature type="chain" id="PRO_0000238171" description="Phosphoglycolate phosphatase">
    <location>
        <begin position="1"/>
        <end position="272"/>
    </location>
</feature>
<feature type="active site" description="Nucleophile" evidence="1">
    <location>
        <position position="19"/>
    </location>
</feature>
<feature type="binding site" evidence="1">
    <location>
        <position position="19"/>
    </location>
    <ligand>
        <name>Mg(2+)</name>
        <dbReference type="ChEBI" id="CHEBI:18420"/>
    </ligand>
</feature>
<feature type="binding site" evidence="1">
    <location>
        <position position="21"/>
    </location>
    <ligand>
        <name>Mg(2+)</name>
        <dbReference type="ChEBI" id="CHEBI:18420"/>
    </ligand>
</feature>
<feature type="binding site" evidence="1">
    <location>
        <position position="182"/>
    </location>
    <ligand>
        <name>Mg(2+)</name>
        <dbReference type="ChEBI" id="CHEBI:18420"/>
    </ligand>
</feature>